<evidence type="ECO:0000255" key="1">
    <source>
        <dbReference type="HAMAP-Rule" id="MF_00176"/>
    </source>
</evidence>
<name>SYS_CLOBB</name>
<protein>
    <recommendedName>
        <fullName evidence="1">Serine--tRNA ligase</fullName>
        <ecNumber evidence="1">6.1.1.11</ecNumber>
    </recommendedName>
    <alternativeName>
        <fullName evidence="1">Seryl-tRNA synthetase</fullName>
        <shortName evidence="1">SerRS</shortName>
    </alternativeName>
    <alternativeName>
        <fullName evidence="1">Seryl-tRNA(Ser/Sec) synthetase</fullName>
    </alternativeName>
</protein>
<accession>B2THC5</accession>
<dbReference type="EC" id="6.1.1.11" evidence="1"/>
<dbReference type="EMBL" id="CP001056">
    <property type="protein sequence ID" value="ACD24107.1"/>
    <property type="molecule type" value="Genomic_DNA"/>
</dbReference>
<dbReference type="SMR" id="B2THC5"/>
<dbReference type="KEGG" id="cbk:CLL_A0018"/>
<dbReference type="PATRIC" id="fig|935198.13.peg.13"/>
<dbReference type="HOGENOM" id="CLU_023797_1_1_9"/>
<dbReference type="UniPathway" id="UPA00906">
    <property type="reaction ID" value="UER00895"/>
</dbReference>
<dbReference type="Proteomes" id="UP000001195">
    <property type="component" value="Chromosome"/>
</dbReference>
<dbReference type="GO" id="GO:0005737">
    <property type="term" value="C:cytoplasm"/>
    <property type="evidence" value="ECO:0007669"/>
    <property type="project" value="UniProtKB-SubCell"/>
</dbReference>
<dbReference type="GO" id="GO:0005524">
    <property type="term" value="F:ATP binding"/>
    <property type="evidence" value="ECO:0007669"/>
    <property type="project" value="UniProtKB-UniRule"/>
</dbReference>
<dbReference type="GO" id="GO:0140096">
    <property type="term" value="F:catalytic activity, acting on a protein"/>
    <property type="evidence" value="ECO:0007669"/>
    <property type="project" value="UniProtKB-ARBA"/>
</dbReference>
<dbReference type="GO" id="GO:0004828">
    <property type="term" value="F:serine-tRNA ligase activity"/>
    <property type="evidence" value="ECO:0007669"/>
    <property type="project" value="UniProtKB-UniRule"/>
</dbReference>
<dbReference type="GO" id="GO:0016740">
    <property type="term" value="F:transferase activity"/>
    <property type="evidence" value="ECO:0007669"/>
    <property type="project" value="UniProtKB-ARBA"/>
</dbReference>
<dbReference type="GO" id="GO:0016260">
    <property type="term" value="P:selenocysteine biosynthetic process"/>
    <property type="evidence" value="ECO:0007669"/>
    <property type="project" value="UniProtKB-UniRule"/>
</dbReference>
<dbReference type="GO" id="GO:0006434">
    <property type="term" value="P:seryl-tRNA aminoacylation"/>
    <property type="evidence" value="ECO:0007669"/>
    <property type="project" value="UniProtKB-UniRule"/>
</dbReference>
<dbReference type="CDD" id="cd00770">
    <property type="entry name" value="SerRS_core"/>
    <property type="match status" value="1"/>
</dbReference>
<dbReference type="Gene3D" id="3.30.930.10">
    <property type="entry name" value="Bira Bifunctional Protein, Domain 2"/>
    <property type="match status" value="1"/>
</dbReference>
<dbReference type="Gene3D" id="1.10.287.40">
    <property type="entry name" value="Serine-tRNA synthetase, tRNA binding domain"/>
    <property type="match status" value="1"/>
</dbReference>
<dbReference type="HAMAP" id="MF_00176">
    <property type="entry name" value="Ser_tRNA_synth_type1"/>
    <property type="match status" value="1"/>
</dbReference>
<dbReference type="InterPro" id="IPR002314">
    <property type="entry name" value="aa-tRNA-synt_IIb"/>
</dbReference>
<dbReference type="InterPro" id="IPR006195">
    <property type="entry name" value="aa-tRNA-synth_II"/>
</dbReference>
<dbReference type="InterPro" id="IPR045864">
    <property type="entry name" value="aa-tRNA-synth_II/BPL/LPL"/>
</dbReference>
<dbReference type="InterPro" id="IPR002317">
    <property type="entry name" value="Ser-tRNA-ligase_type_1"/>
</dbReference>
<dbReference type="InterPro" id="IPR015866">
    <property type="entry name" value="Ser-tRNA-synth_1_N"/>
</dbReference>
<dbReference type="InterPro" id="IPR042103">
    <property type="entry name" value="SerRS_1_N_sf"/>
</dbReference>
<dbReference type="InterPro" id="IPR033729">
    <property type="entry name" value="SerRS_core"/>
</dbReference>
<dbReference type="InterPro" id="IPR010978">
    <property type="entry name" value="tRNA-bd_arm"/>
</dbReference>
<dbReference type="NCBIfam" id="TIGR00414">
    <property type="entry name" value="serS"/>
    <property type="match status" value="1"/>
</dbReference>
<dbReference type="PANTHER" id="PTHR43697:SF1">
    <property type="entry name" value="SERINE--TRNA LIGASE"/>
    <property type="match status" value="1"/>
</dbReference>
<dbReference type="PANTHER" id="PTHR43697">
    <property type="entry name" value="SERYL-TRNA SYNTHETASE"/>
    <property type="match status" value="1"/>
</dbReference>
<dbReference type="Pfam" id="PF02403">
    <property type="entry name" value="Seryl_tRNA_N"/>
    <property type="match status" value="1"/>
</dbReference>
<dbReference type="Pfam" id="PF00587">
    <property type="entry name" value="tRNA-synt_2b"/>
    <property type="match status" value="1"/>
</dbReference>
<dbReference type="PIRSF" id="PIRSF001529">
    <property type="entry name" value="Ser-tRNA-synth_IIa"/>
    <property type="match status" value="1"/>
</dbReference>
<dbReference type="PRINTS" id="PR00981">
    <property type="entry name" value="TRNASYNTHSER"/>
</dbReference>
<dbReference type="SUPFAM" id="SSF55681">
    <property type="entry name" value="Class II aaRS and biotin synthetases"/>
    <property type="match status" value="1"/>
</dbReference>
<dbReference type="SUPFAM" id="SSF46589">
    <property type="entry name" value="tRNA-binding arm"/>
    <property type="match status" value="1"/>
</dbReference>
<dbReference type="PROSITE" id="PS50862">
    <property type="entry name" value="AA_TRNA_LIGASE_II"/>
    <property type="match status" value="1"/>
</dbReference>
<proteinExistence type="inferred from homology"/>
<sequence>MLDLKRIRNNPEEIKKLLSNRGEDFDVAVIDEIVTLDEERRKILVEVESLKSKRNQVSAEIPKLKKAGEDVTEIMNDMRKLGEEIKNFDTRVNEINERIEYIMLRIPNIPNPEVPDGETDEDNVEIKKWGEPTKFNFEPKAHWDLGTDLNILDFERGGKVAGSRFTVYKGLGARLERSIINYFLDKHTTENGYTEILPPYMVNRDSMTGTGQLPKFEEDAFKVENNGYFLIPTAEVPVTNMYRNEVLSGDILPIKHAAYSACFRAEAGSAGRDTRGLVRQHQFNKVELVKFCKPEDSYAELDKLVEDAESVLQGLGLPYRIVRICKGDLGFTAALKYDIEVWMPSYNRYVEISSCSNFEDFQARRANIKYRETPKDKPKFIHTLNGSGVAIGRTVAAVLENYQKEDGTVEIPEAIKRFMNVDFIK</sequence>
<gene>
    <name evidence="1" type="primary">serS</name>
    <name type="ordered locus">CLL_A0018</name>
</gene>
<feature type="chain" id="PRO_1000098052" description="Serine--tRNA ligase">
    <location>
        <begin position="1"/>
        <end position="425"/>
    </location>
</feature>
<feature type="binding site" evidence="1">
    <location>
        <begin position="233"/>
        <end position="235"/>
    </location>
    <ligand>
        <name>L-serine</name>
        <dbReference type="ChEBI" id="CHEBI:33384"/>
    </ligand>
</feature>
<feature type="binding site" evidence="1">
    <location>
        <begin position="264"/>
        <end position="266"/>
    </location>
    <ligand>
        <name>ATP</name>
        <dbReference type="ChEBI" id="CHEBI:30616"/>
    </ligand>
</feature>
<feature type="binding site" evidence="1">
    <location>
        <position position="287"/>
    </location>
    <ligand>
        <name>L-serine</name>
        <dbReference type="ChEBI" id="CHEBI:33384"/>
    </ligand>
</feature>
<feature type="binding site" evidence="1">
    <location>
        <begin position="351"/>
        <end position="354"/>
    </location>
    <ligand>
        <name>ATP</name>
        <dbReference type="ChEBI" id="CHEBI:30616"/>
    </ligand>
</feature>
<feature type="binding site" evidence="1">
    <location>
        <position position="387"/>
    </location>
    <ligand>
        <name>L-serine</name>
        <dbReference type="ChEBI" id="CHEBI:33384"/>
    </ligand>
</feature>
<organism>
    <name type="scientific">Clostridium botulinum (strain Eklund 17B / Type B)</name>
    <dbReference type="NCBI Taxonomy" id="935198"/>
    <lineage>
        <taxon>Bacteria</taxon>
        <taxon>Bacillati</taxon>
        <taxon>Bacillota</taxon>
        <taxon>Clostridia</taxon>
        <taxon>Eubacteriales</taxon>
        <taxon>Clostridiaceae</taxon>
        <taxon>Clostridium</taxon>
    </lineage>
</organism>
<keyword id="KW-0030">Aminoacyl-tRNA synthetase</keyword>
<keyword id="KW-0067">ATP-binding</keyword>
<keyword id="KW-0963">Cytoplasm</keyword>
<keyword id="KW-0436">Ligase</keyword>
<keyword id="KW-0547">Nucleotide-binding</keyword>
<keyword id="KW-0648">Protein biosynthesis</keyword>
<reference key="1">
    <citation type="submission" date="2008-04" db="EMBL/GenBank/DDBJ databases">
        <title>Complete sequence of Clostridium botulinum strain Eklund.</title>
        <authorList>
            <person name="Brinkac L.M."/>
            <person name="Brown J.L."/>
            <person name="Bruce D."/>
            <person name="Detter C."/>
            <person name="Munk C."/>
            <person name="Smith L.A."/>
            <person name="Smith T.J."/>
            <person name="Sutton G."/>
            <person name="Brettin T.S."/>
        </authorList>
    </citation>
    <scope>NUCLEOTIDE SEQUENCE [LARGE SCALE GENOMIC DNA]</scope>
    <source>
        <strain>Eklund 17B / Type B</strain>
    </source>
</reference>
<comment type="function">
    <text evidence="1">Catalyzes the attachment of serine to tRNA(Ser). Is also able to aminoacylate tRNA(Sec) with serine, to form the misacylated tRNA L-seryl-tRNA(Sec), which will be further converted into selenocysteinyl-tRNA(Sec).</text>
</comment>
<comment type="catalytic activity">
    <reaction evidence="1">
        <text>tRNA(Ser) + L-serine + ATP = L-seryl-tRNA(Ser) + AMP + diphosphate + H(+)</text>
        <dbReference type="Rhea" id="RHEA:12292"/>
        <dbReference type="Rhea" id="RHEA-COMP:9669"/>
        <dbReference type="Rhea" id="RHEA-COMP:9703"/>
        <dbReference type="ChEBI" id="CHEBI:15378"/>
        <dbReference type="ChEBI" id="CHEBI:30616"/>
        <dbReference type="ChEBI" id="CHEBI:33019"/>
        <dbReference type="ChEBI" id="CHEBI:33384"/>
        <dbReference type="ChEBI" id="CHEBI:78442"/>
        <dbReference type="ChEBI" id="CHEBI:78533"/>
        <dbReference type="ChEBI" id="CHEBI:456215"/>
        <dbReference type="EC" id="6.1.1.11"/>
    </reaction>
</comment>
<comment type="catalytic activity">
    <reaction evidence="1">
        <text>tRNA(Sec) + L-serine + ATP = L-seryl-tRNA(Sec) + AMP + diphosphate + H(+)</text>
        <dbReference type="Rhea" id="RHEA:42580"/>
        <dbReference type="Rhea" id="RHEA-COMP:9742"/>
        <dbReference type="Rhea" id="RHEA-COMP:10128"/>
        <dbReference type="ChEBI" id="CHEBI:15378"/>
        <dbReference type="ChEBI" id="CHEBI:30616"/>
        <dbReference type="ChEBI" id="CHEBI:33019"/>
        <dbReference type="ChEBI" id="CHEBI:33384"/>
        <dbReference type="ChEBI" id="CHEBI:78442"/>
        <dbReference type="ChEBI" id="CHEBI:78533"/>
        <dbReference type="ChEBI" id="CHEBI:456215"/>
        <dbReference type="EC" id="6.1.1.11"/>
    </reaction>
</comment>
<comment type="pathway">
    <text evidence="1">Aminoacyl-tRNA biosynthesis; selenocysteinyl-tRNA(Sec) biosynthesis; L-seryl-tRNA(Sec) from L-serine and tRNA(Sec): step 1/1.</text>
</comment>
<comment type="subunit">
    <text evidence="1">Homodimer. The tRNA molecule binds across the dimer.</text>
</comment>
<comment type="subcellular location">
    <subcellularLocation>
        <location evidence="1">Cytoplasm</location>
    </subcellularLocation>
</comment>
<comment type="domain">
    <text evidence="1">Consists of two distinct domains, a catalytic core and a N-terminal extension that is involved in tRNA binding.</text>
</comment>
<comment type="similarity">
    <text evidence="1">Belongs to the class-II aminoacyl-tRNA synthetase family. Type-1 seryl-tRNA synthetase subfamily.</text>
</comment>